<keyword id="KW-0002">3D-structure</keyword>
<keyword id="KW-0007">Acetylation</keyword>
<keyword id="KW-1003">Cell membrane</keyword>
<keyword id="KW-0963">Cytoplasm</keyword>
<keyword id="KW-0378">Hydrolase</keyword>
<keyword id="KW-0391">Immunity</keyword>
<keyword id="KW-0399">Innate immunity</keyword>
<keyword id="KW-0472">Membrane</keyword>
<keyword id="KW-0597">Phosphoprotein</keyword>
<keyword id="KW-0645">Protease</keyword>
<keyword id="KW-0647">Proteasome</keyword>
<keyword id="KW-1185">Reference proteome</keyword>
<keyword id="KW-0788">Thiol protease</keyword>
<keyword id="KW-0833">Ubl conjugation pathway</keyword>
<accession>Q9JMA1</accession>
<accession>Q543U5</accession>
<accession>Q923F2</accession>
<accession>Q9D0L0</accession>
<protein>
    <recommendedName>
        <fullName>Ubiquitin carboxyl-terminal hydrolase 14</fullName>
        <ecNumber evidence="2">3.4.19.12</ecNumber>
    </recommendedName>
    <alternativeName>
        <fullName>Deubiquitinating enzyme 14</fullName>
    </alternativeName>
    <alternativeName>
        <fullName>Ubiquitin thioesterase 14</fullName>
    </alternativeName>
    <alternativeName>
        <fullName>Ubiquitin-specific-processing protease 14</fullName>
    </alternativeName>
</protein>
<proteinExistence type="evidence at protein level"/>
<evidence type="ECO:0000250" key="1"/>
<evidence type="ECO:0000250" key="2">
    <source>
        <dbReference type="UniProtKB" id="P54578"/>
    </source>
</evidence>
<evidence type="ECO:0000255" key="3">
    <source>
        <dbReference type="PROSITE-ProRule" id="PRU00214"/>
    </source>
</evidence>
<evidence type="ECO:0000255" key="4">
    <source>
        <dbReference type="PROSITE-ProRule" id="PRU10092"/>
    </source>
</evidence>
<evidence type="ECO:0000255" key="5">
    <source>
        <dbReference type="PROSITE-ProRule" id="PRU10093"/>
    </source>
</evidence>
<evidence type="ECO:0000269" key="6">
    <source>
    </source>
</evidence>
<evidence type="ECO:0000269" key="7">
    <source>
    </source>
</evidence>
<evidence type="ECO:0000305" key="8"/>
<evidence type="ECO:0007744" key="9">
    <source>
    </source>
</evidence>
<evidence type="ECO:0007744" key="10">
    <source>
    </source>
</evidence>
<evidence type="ECO:0007829" key="11">
    <source>
        <dbReference type="PDB" id="1WGG"/>
    </source>
</evidence>
<comment type="function">
    <text evidence="2 6 7">Proteasome-associated deubiquitinase which releases ubiquitin from the proteasome targeted ubiquitinated proteins (PubMed:16190881). Ensures the regeneration of ubiquitin at the proteasome. Is a reversibly associated subunit of the proteasome and a large fraction of proteasome-free protein exists within the cell. Required for the degradation of the chemokine receptor CXCR4 which is critical for CXCL12-induced cell chemotaxis. Also serves as a physiological inhibitor of endoplasmic reticulum-associated degradation (ERAD) under the non-stressed condition by inhibiting the degradation of unfolded endoplasmic reticulum proteins via interaction with ERN1 (By similarity). Indispensable for synaptic development and function at neuromuscular junctions (NMJs) (PubMed:19726649). Plays a role in the innate immune defense against viruses by stabilizing the viral DNA sensor CGAS and thus inhibiting its autophagic degradation (By similarity). Inhibits OPTN-mediated selective autophagic degradation of KDM4D and thereby negatively regulates H3K9me2 and H3K9me3 (By similarity).</text>
</comment>
<comment type="catalytic activity">
    <reaction evidence="2">
        <text>Thiol-dependent hydrolysis of ester, thioester, amide, peptide and isopeptide bonds formed by the C-terminal Gly of ubiquitin (a 76-residue protein attached to proteins as an intracellular targeting signal).</text>
        <dbReference type="EC" id="3.4.19.12"/>
    </reaction>
</comment>
<comment type="subunit">
    <text evidence="2">Homodimer (Potential). Associates with the 26S proteasome. Interacts with FANCC, CXCR4 and ERN1. Interacts with TRIM14; this interaction recruits USP14 to cleave ubiquitin chains of CGAS and KDM4D (By similarity).</text>
</comment>
<comment type="subcellular location">
    <subcellularLocation>
        <location evidence="1">Cytoplasm</location>
    </subcellularLocation>
    <subcellularLocation>
        <location evidence="1">Cell membrane</location>
        <topology evidence="1">Peripheral membrane protein</topology>
    </subcellularLocation>
</comment>
<comment type="similarity">
    <text evidence="8">Belongs to the peptidase C19 family. USP14/UBP6 subfamily.</text>
</comment>
<organism>
    <name type="scientific">Mus musculus</name>
    <name type="common">Mouse</name>
    <dbReference type="NCBI Taxonomy" id="10090"/>
    <lineage>
        <taxon>Eukaryota</taxon>
        <taxon>Metazoa</taxon>
        <taxon>Chordata</taxon>
        <taxon>Craniata</taxon>
        <taxon>Vertebrata</taxon>
        <taxon>Euteleostomi</taxon>
        <taxon>Mammalia</taxon>
        <taxon>Eutheria</taxon>
        <taxon>Euarchontoglires</taxon>
        <taxon>Glires</taxon>
        <taxon>Rodentia</taxon>
        <taxon>Myomorpha</taxon>
        <taxon>Muroidea</taxon>
        <taxon>Muridae</taxon>
        <taxon>Murinae</taxon>
        <taxon>Mus</taxon>
        <taxon>Mus</taxon>
    </lineage>
</organism>
<sequence>MPLYSVTVKWGKEKFEGVELNTDEPPMVFKAQLFALTGVQPARQKVMVKGGTLKDDDWGNIKMKNGMTVLMMGSADALPEEPSAKTVFVEDMTEEQLATAMELPCGLTNLGNTCYMNATVQCIRSVPELKDALKRYAGALRASGEMASAQYITAALRDLFDSMDKTSSSIPPIILLQFLHMAFPQFAEKGEQGQYLQQDANECWIQMMRVLQQKLEAIEDDSGRETDSSSAPAVTPSKKKSLIDQYFGVEFETTMKCTESEEEEVTKGKENQLQLSCFINQEVKYLFTGLKLRLQEEITKQSPTLQRNALYIKSSKISRLPAYLTIQMVRFFYKEKESVNAKVLKDVKFPLMLDVYELCTPELQEKMVSFRSKFKDLEDKKVNQQPNANDKNSPPKEIKYEPFSFADDIGSNNCGYYDLQAVLTHQGRSSSSGHYVSWVRRKQDEWIKFDDDKVSIVTPEDILRLSGGGDWHIAYVLLYGPRRVEIMEEESEQ</sequence>
<reference key="1">
    <citation type="submission" date="1999-11" db="EMBL/GenBank/DDBJ databases">
        <title>Mouse deubiquitinating enzyme-type TGT.</title>
        <authorList>
            <person name="Hidaka T."/>
            <person name="Morishita T."/>
        </authorList>
    </citation>
    <scope>NUCLEOTIDE SEQUENCE [MRNA]</scope>
    <source>
        <tissue>Brain</tissue>
    </source>
</reference>
<reference key="2">
    <citation type="journal article" date="2005" name="Science">
        <title>The transcriptional landscape of the mammalian genome.</title>
        <authorList>
            <person name="Carninci P."/>
            <person name="Kasukawa T."/>
            <person name="Katayama S."/>
            <person name="Gough J."/>
            <person name="Frith M.C."/>
            <person name="Maeda N."/>
            <person name="Oyama R."/>
            <person name="Ravasi T."/>
            <person name="Lenhard B."/>
            <person name="Wells C."/>
            <person name="Kodzius R."/>
            <person name="Shimokawa K."/>
            <person name="Bajic V.B."/>
            <person name="Brenner S.E."/>
            <person name="Batalov S."/>
            <person name="Forrest A.R."/>
            <person name="Zavolan M."/>
            <person name="Davis M.J."/>
            <person name="Wilming L.G."/>
            <person name="Aidinis V."/>
            <person name="Allen J.E."/>
            <person name="Ambesi-Impiombato A."/>
            <person name="Apweiler R."/>
            <person name="Aturaliya R.N."/>
            <person name="Bailey T.L."/>
            <person name="Bansal M."/>
            <person name="Baxter L."/>
            <person name="Beisel K.W."/>
            <person name="Bersano T."/>
            <person name="Bono H."/>
            <person name="Chalk A.M."/>
            <person name="Chiu K.P."/>
            <person name="Choudhary V."/>
            <person name="Christoffels A."/>
            <person name="Clutterbuck D.R."/>
            <person name="Crowe M.L."/>
            <person name="Dalla E."/>
            <person name="Dalrymple B.P."/>
            <person name="de Bono B."/>
            <person name="Della Gatta G."/>
            <person name="di Bernardo D."/>
            <person name="Down T."/>
            <person name="Engstrom P."/>
            <person name="Fagiolini M."/>
            <person name="Faulkner G."/>
            <person name="Fletcher C.F."/>
            <person name="Fukushima T."/>
            <person name="Furuno M."/>
            <person name="Futaki S."/>
            <person name="Gariboldi M."/>
            <person name="Georgii-Hemming P."/>
            <person name="Gingeras T.R."/>
            <person name="Gojobori T."/>
            <person name="Green R.E."/>
            <person name="Gustincich S."/>
            <person name="Harbers M."/>
            <person name="Hayashi Y."/>
            <person name="Hensch T.K."/>
            <person name="Hirokawa N."/>
            <person name="Hill D."/>
            <person name="Huminiecki L."/>
            <person name="Iacono M."/>
            <person name="Ikeo K."/>
            <person name="Iwama A."/>
            <person name="Ishikawa T."/>
            <person name="Jakt M."/>
            <person name="Kanapin A."/>
            <person name="Katoh M."/>
            <person name="Kawasawa Y."/>
            <person name="Kelso J."/>
            <person name="Kitamura H."/>
            <person name="Kitano H."/>
            <person name="Kollias G."/>
            <person name="Krishnan S.P."/>
            <person name="Kruger A."/>
            <person name="Kummerfeld S.K."/>
            <person name="Kurochkin I.V."/>
            <person name="Lareau L.F."/>
            <person name="Lazarevic D."/>
            <person name="Lipovich L."/>
            <person name="Liu J."/>
            <person name="Liuni S."/>
            <person name="McWilliam S."/>
            <person name="Madan Babu M."/>
            <person name="Madera M."/>
            <person name="Marchionni L."/>
            <person name="Matsuda H."/>
            <person name="Matsuzawa S."/>
            <person name="Miki H."/>
            <person name="Mignone F."/>
            <person name="Miyake S."/>
            <person name="Morris K."/>
            <person name="Mottagui-Tabar S."/>
            <person name="Mulder N."/>
            <person name="Nakano N."/>
            <person name="Nakauchi H."/>
            <person name="Ng P."/>
            <person name="Nilsson R."/>
            <person name="Nishiguchi S."/>
            <person name="Nishikawa S."/>
            <person name="Nori F."/>
            <person name="Ohara O."/>
            <person name="Okazaki Y."/>
            <person name="Orlando V."/>
            <person name="Pang K.C."/>
            <person name="Pavan W.J."/>
            <person name="Pavesi G."/>
            <person name="Pesole G."/>
            <person name="Petrovsky N."/>
            <person name="Piazza S."/>
            <person name="Reed J."/>
            <person name="Reid J.F."/>
            <person name="Ring B.Z."/>
            <person name="Ringwald M."/>
            <person name="Rost B."/>
            <person name="Ruan Y."/>
            <person name="Salzberg S.L."/>
            <person name="Sandelin A."/>
            <person name="Schneider C."/>
            <person name="Schoenbach C."/>
            <person name="Sekiguchi K."/>
            <person name="Semple C.A."/>
            <person name="Seno S."/>
            <person name="Sessa L."/>
            <person name="Sheng Y."/>
            <person name="Shibata Y."/>
            <person name="Shimada H."/>
            <person name="Shimada K."/>
            <person name="Silva D."/>
            <person name="Sinclair B."/>
            <person name="Sperling S."/>
            <person name="Stupka E."/>
            <person name="Sugiura K."/>
            <person name="Sultana R."/>
            <person name="Takenaka Y."/>
            <person name="Taki K."/>
            <person name="Tammoja K."/>
            <person name="Tan S.L."/>
            <person name="Tang S."/>
            <person name="Taylor M.S."/>
            <person name="Tegner J."/>
            <person name="Teichmann S.A."/>
            <person name="Ueda H.R."/>
            <person name="van Nimwegen E."/>
            <person name="Verardo R."/>
            <person name="Wei C.L."/>
            <person name="Yagi K."/>
            <person name="Yamanishi H."/>
            <person name="Zabarovsky E."/>
            <person name="Zhu S."/>
            <person name="Zimmer A."/>
            <person name="Hide W."/>
            <person name="Bult C."/>
            <person name="Grimmond S.M."/>
            <person name="Teasdale R.D."/>
            <person name="Liu E.T."/>
            <person name="Brusic V."/>
            <person name="Quackenbush J."/>
            <person name="Wahlestedt C."/>
            <person name="Mattick J.S."/>
            <person name="Hume D.A."/>
            <person name="Kai C."/>
            <person name="Sasaki D."/>
            <person name="Tomaru Y."/>
            <person name="Fukuda S."/>
            <person name="Kanamori-Katayama M."/>
            <person name="Suzuki M."/>
            <person name="Aoki J."/>
            <person name="Arakawa T."/>
            <person name="Iida J."/>
            <person name="Imamura K."/>
            <person name="Itoh M."/>
            <person name="Kato T."/>
            <person name="Kawaji H."/>
            <person name="Kawagashira N."/>
            <person name="Kawashima T."/>
            <person name="Kojima M."/>
            <person name="Kondo S."/>
            <person name="Konno H."/>
            <person name="Nakano K."/>
            <person name="Ninomiya N."/>
            <person name="Nishio T."/>
            <person name="Okada M."/>
            <person name="Plessy C."/>
            <person name="Shibata K."/>
            <person name="Shiraki T."/>
            <person name="Suzuki S."/>
            <person name="Tagami M."/>
            <person name="Waki K."/>
            <person name="Watahiki A."/>
            <person name="Okamura-Oho Y."/>
            <person name="Suzuki H."/>
            <person name="Kawai J."/>
            <person name="Hayashizaki Y."/>
        </authorList>
    </citation>
    <scope>NUCLEOTIDE SEQUENCE [LARGE SCALE MRNA]</scope>
    <source>
        <strain>C57BL/6J</strain>
        <tissue>Corpora quadrigemina</tissue>
        <tissue>Embryo</tissue>
        <tissue>Testis</tissue>
    </source>
</reference>
<reference key="3">
    <citation type="journal article" date="2004" name="Genome Res.">
        <title>The status, quality, and expansion of the NIH full-length cDNA project: the Mammalian Gene Collection (MGC).</title>
        <authorList>
            <consortium name="The MGC Project Team"/>
        </authorList>
    </citation>
    <scope>NUCLEOTIDE SEQUENCE [LARGE SCALE MRNA]</scope>
</reference>
<reference key="4">
    <citation type="journal article" date="2001" name="EMBO J.">
        <title>A novel active site-directed probe specific for deubiquitylating enzymes reveals proteasome association of USP14.</title>
        <authorList>
            <person name="Borodovsky A."/>
            <person name="Kessler B.M."/>
            <person name="Casagrande R."/>
            <person name="Overkleeft H.S."/>
            <person name="Wilkinson K.D."/>
            <person name="Ploegh H.L."/>
        </authorList>
    </citation>
    <scope>IDENTIFICATION</scope>
    <scope>ASSOCIATION WITH THE 26S PROTEASOME</scope>
</reference>
<reference key="5">
    <citation type="journal article" date="2005" name="J. Neurochem.">
        <title>Loss of Usp14 results in reduced levels of ubiquitin in ataxia mice.</title>
        <authorList>
            <person name="Anderson C."/>
            <person name="Crimmins S."/>
            <person name="Wilson J.A."/>
            <person name="Korbel G.A."/>
            <person name="Ploegh H.L."/>
            <person name="Wilson S.M."/>
        </authorList>
    </citation>
    <scope>FUNCTION</scope>
    <scope>ASSOCIATION WITH THE 26S PROTEASOME</scope>
</reference>
<reference key="6">
    <citation type="journal article" date="2007" name="Proc. Natl. Acad. Sci. U.S.A.">
        <title>Large-scale phosphorylation analysis of mouse liver.</title>
        <authorList>
            <person name="Villen J."/>
            <person name="Beausoleil S.A."/>
            <person name="Gerber S.A."/>
            <person name="Gygi S.P."/>
        </authorList>
    </citation>
    <scope>PHOSPHORYLATION [LARGE SCALE ANALYSIS] AT SER-143</scope>
    <scope>IDENTIFICATION BY MASS SPECTROMETRY [LARGE SCALE ANALYSIS]</scope>
    <source>
        <tissue>Liver</tissue>
    </source>
</reference>
<reference key="7">
    <citation type="journal article" date="2009" name="J. Neurosci.">
        <title>The proteasome-associated deubiquitinating enzyme Usp14 is essential for the maintenance of synaptic ubiquitin levels and the development of neuromuscular junctions.</title>
        <authorList>
            <person name="Chen P.C."/>
            <person name="Qin L.N."/>
            <person name="Li X.M."/>
            <person name="Walters B.J."/>
            <person name="Wilson J.A."/>
            <person name="Mei L."/>
            <person name="Wilson S.M."/>
        </authorList>
    </citation>
    <scope>FUNCTION</scope>
</reference>
<reference key="8">
    <citation type="journal article" date="2010" name="Cell">
        <title>A tissue-specific atlas of mouse protein phosphorylation and expression.</title>
        <authorList>
            <person name="Huttlin E.L."/>
            <person name="Jedrychowski M.P."/>
            <person name="Elias J.E."/>
            <person name="Goswami T."/>
            <person name="Rad R."/>
            <person name="Beausoleil S.A."/>
            <person name="Villen J."/>
            <person name="Haas W."/>
            <person name="Sowa M.E."/>
            <person name="Gygi S.P."/>
        </authorList>
    </citation>
    <scope>PHOSPHORYLATION [LARGE SCALE ANALYSIS] AT THR-52; SER-143 AND SER-148</scope>
    <scope>IDENTIFICATION BY MASS SPECTROMETRY [LARGE SCALE ANALYSIS]</scope>
    <source>
        <tissue>Brain</tissue>
        <tissue>Brown adipose tissue</tissue>
        <tissue>Heart</tissue>
        <tissue>Kidney</tissue>
        <tissue>Liver</tissue>
        <tissue>Lung</tissue>
        <tissue>Pancreas</tissue>
        <tissue>Spleen</tissue>
        <tissue>Testis</tissue>
    </source>
</reference>
<reference key="9">
    <citation type="submission" date="2004-11" db="PDB data bank">
        <title>Solution structure of the N-terminal ubiquitin-like domain of mouse ubiquitin specific protease 14 (usp14).</title>
        <authorList>
            <consortium name="RIKEN structural genomics initiative (RSGI)"/>
        </authorList>
    </citation>
    <scope>STRUCTURE BY NMR OF 4-86</scope>
</reference>
<name>UBP14_MOUSE</name>
<gene>
    <name type="primary">Usp14</name>
</gene>
<feature type="chain" id="PRO_0000080637" description="Ubiquitin carboxyl-terminal hydrolase 14">
    <location>
        <begin position="1"/>
        <end position="493"/>
    </location>
</feature>
<feature type="domain" description="Ubiquitin-like" evidence="3">
    <location>
        <begin position="4"/>
        <end position="80"/>
    </location>
</feature>
<feature type="domain" description="USP">
    <location>
        <begin position="105"/>
        <end position="482"/>
    </location>
</feature>
<feature type="active site" description="Nucleophile" evidence="4 5">
    <location>
        <position position="114"/>
    </location>
</feature>
<feature type="active site" description="Proton acceptor" evidence="4 5">
    <location>
        <position position="434"/>
    </location>
</feature>
<feature type="modified residue" description="Phosphothreonine" evidence="10">
    <location>
        <position position="52"/>
    </location>
</feature>
<feature type="modified residue" description="Phosphoserine" evidence="9 10">
    <location>
        <position position="143"/>
    </location>
</feature>
<feature type="modified residue" description="Phosphoserine" evidence="10">
    <location>
        <position position="148"/>
    </location>
</feature>
<feature type="modified residue" description="Phosphothreonine" evidence="2">
    <location>
        <position position="235"/>
    </location>
</feature>
<feature type="modified residue" description="Phosphoserine" evidence="2">
    <location>
        <position position="237"/>
    </location>
</feature>
<feature type="modified residue" description="Phosphoserine" evidence="2">
    <location>
        <position position="302"/>
    </location>
</feature>
<feature type="modified residue" description="Phosphoserine" evidence="2">
    <location>
        <position position="431"/>
    </location>
</feature>
<feature type="modified residue" description="N6-acetyllysine" evidence="2">
    <location>
        <position position="448"/>
    </location>
</feature>
<feature type="sequence conflict" description="In Ref. 1; BAA93551." evidence="8" ref="1">
    <original>Q</original>
    <variation>R</variation>
    <location>
        <position position="185"/>
    </location>
</feature>
<feature type="sequence conflict" description="In Ref. 1; BAA93551." evidence="8" ref="1">
    <original>L</original>
    <variation>S</variation>
    <location>
        <position position="310"/>
    </location>
</feature>
<feature type="sequence conflict" description="In Ref. 2; BAB27544." evidence="8" ref="2">
    <original>Q</original>
    <variation>E</variation>
    <location>
        <position position="385"/>
    </location>
</feature>
<feature type="strand" evidence="11">
    <location>
        <begin position="4"/>
        <end position="10"/>
    </location>
</feature>
<feature type="strand" evidence="11">
    <location>
        <begin position="13"/>
        <end position="24"/>
    </location>
</feature>
<feature type="helix" evidence="11">
    <location>
        <begin position="26"/>
        <end position="36"/>
    </location>
</feature>
<feature type="turn" evidence="11">
    <location>
        <begin position="41"/>
        <end position="43"/>
    </location>
</feature>
<feature type="strand" evidence="11">
    <location>
        <begin position="68"/>
        <end position="70"/>
    </location>
</feature>
<dbReference type="EC" id="3.4.19.12" evidence="2"/>
<dbReference type="EMBL" id="AB034633">
    <property type="protein sequence ID" value="BAA93551.1"/>
    <property type="molecule type" value="mRNA"/>
</dbReference>
<dbReference type="EMBL" id="AK011322">
    <property type="protein sequence ID" value="BAB27544.1"/>
    <property type="molecule type" value="mRNA"/>
</dbReference>
<dbReference type="EMBL" id="AK029977">
    <property type="protein sequence ID" value="BAC26713.1"/>
    <property type="molecule type" value="mRNA"/>
</dbReference>
<dbReference type="EMBL" id="AK045909">
    <property type="protein sequence ID" value="BAC32528.1"/>
    <property type="molecule type" value="mRNA"/>
</dbReference>
<dbReference type="EMBL" id="BC005571">
    <property type="protein sequence ID" value="AAH05571.1"/>
    <property type="molecule type" value="mRNA"/>
</dbReference>
<dbReference type="CCDS" id="CCDS37735.1"/>
<dbReference type="RefSeq" id="NP_067497.2">
    <property type="nucleotide sequence ID" value="NM_021522.4"/>
</dbReference>
<dbReference type="PDB" id="1WGG">
    <property type="method" value="NMR"/>
    <property type="chains" value="A=4-86"/>
</dbReference>
<dbReference type="PDBsum" id="1WGG"/>
<dbReference type="BMRB" id="Q9JMA1"/>
<dbReference type="SMR" id="Q9JMA1"/>
<dbReference type="BioGRID" id="208492">
    <property type="interactions" value="54"/>
</dbReference>
<dbReference type="FunCoup" id="Q9JMA1">
    <property type="interactions" value="4121"/>
</dbReference>
<dbReference type="IntAct" id="Q9JMA1">
    <property type="interactions" value="1"/>
</dbReference>
<dbReference type="MINT" id="Q9JMA1"/>
<dbReference type="STRING" id="10090.ENSMUSP00000089728"/>
<dbReference type="MEROPS" id="C19.015"/>
<dbReference type="GlyGen" id="Q9JMA1">
    <property type="glycosylation" value="2 sites, 1 O-linked glycan (1 site)"/>
</dbReference>
<dbReference type="iPTMnet" id="Q9JMA1"/>
<dbReference type="PhosphoSitePlus" id="Q9JMA1"/>
<dbReference type="SwissPalm" id="Q9JMA1"/>
<dbReference type="jPOST" id="Q9JMA1"/>
<dbReference type="PaxDb" id="10090-ENSMUSP00000089728"/>
<dbReference type="PeptideAtlas" id="Q9JMA1"/>
<dbReference type="ProteomicsDB" id="300070"/>
<dbReference type="Pumba" id="Q9JMA1"/>
<dbReference type="Antibodypedia" id="676">
    <property type="antibodies" value="329 antibodies from 35 providers"/>
</dbReference>
<dbReference type="DNASU" id="59025"/>
<dbReference type="Ensembl" id="ENSMUST00000092096.14">
    <property type="protein sequence ID" value="ENSMUSP00000089728.7"/>
    <property type="gene ID" value="ENSMUSG00000047879.18"/>
</dbReference>
<dbReference type="GeneID" id="59025"/>
<dbReference type="KEGG" id="mmu:59025"/>
<dbReference type="UCSC" id="uc008ean.1">
    <property type="organism name" value="mouse"/>
</dbReference>
<dbReference type="AGR" id="MGI:1928898"/>
<dbReference type="CTD" id="9097"/>
<dbReference type="MGI" id="MGI:1928898">
    <property type="gene designation" value="Usp14"/>
</dbReference>
<dbReference type="VEuPathDB" id="HostDB:ENSMUSG00000047879"/>
<dbReference type="eggNOG" id="KOG1872">
    <property type="taxonomic scope" value="Eukaryota"/>
</dbReference>
<dbReference type="GeneTree" id="ENSGT00390000009615"/>
<dbReference type="InParanoid" id="Q9JMA1"/>
<dbReference type="OMA" id="FKSDAEY"/>
<dbReference type="OrthoDB" id="333239at2759"/>
<dbReference type="PhylomeDB" id="Q9JMA1"/>
<dbReference type="TreeFam" id="TF314494"/>
<dbReference type="Reactome" id="R-MMU-5689880">
    <property type="pathway name" value="Ub-specific processing proteases"/>
</dbReference>
<dbReference type="Reactome" id="R-MMU-9758274">
    <property type="pathway name" value="Regulation of NF-kappa B signaling"/>
</dbReference>
<dbReference type="BioGRID-ORCS" id="59025">
    <property type="hits" value="9 hits in 80 CRISPR screens"/>
</dbReference>
<dbReference type="ChiTaRS" id="Usp14">
    <property type="organism name" value="mouse"/>
</dbReference>
<dbReference type="EvolutionaryTrace" id="Q9JMA1"/>
<dbReference type="PRO" id="PR:Q9JMA1"/>
<dbReference type="Proteomes" id="UP000000589">
    <property type="component" value="Chromosome 18"/>
</dbReference>
<dbReference type="RNAct" id="Q9JMA1">
    <property type="molecule type" value="protein"/>
</dbReference>
<dbReference type="Bgee" id="ENSMUSG00000047879">
    <property type="expression patterns" value="Expressed in ectoplacental cone and 267 other cell types or tissues"/>
</dbReference>
<dbReference type="ExpressionAtlas" id="Q9JMA1">
    <property type="expression patterns" value="baseline and differential"/>
</dbReference>
<dbReference type="GO" id="GO:0009986">
    <property type="term" value="C:cell surface"/>
    <property type="evidence" value="ECO:0007669"/>
    <property type="project" value="Ensembl"/>
</dbReference>
<dbReference type="GO" id="GO:0031410">
    <property type="term" value="C:cytoplasmic vesicle"/>
    <property type="evidence" value="ECO:0007669"/>
    <property type="project" value="Ensembl"/>
</dbReference>
<dbReference type="GO" id="GO:0005783">
    <property type="term" value="C:endoplasmic reticulum"/>
    <property type="evidence" value="ECO:0007669"/>
    <property type="project" value="Ensembl"/>
</dbReference>
<dbReference type="GO" id="GO:0098978">
    <property type="term" value="C:glutamatergic synapse"/>
    <property type="evidence" value="ECO:0000314"/>
    <property type="project" value="SynGO"/>
</dbReference>
<dbReference type="GO" id="GO:0005730">
    <property type="term" value="C:nucleolus"/>
    <property type="evidence" value="ECO:0007669"/>
    <property type="project" value="Ensembl"/>
</dbReference>
<dbReference type="GO" id="GO:0005886">
    <property type="term" value="C:plasma membrane"/>
    <property type="evidence" value="ECO:0007669"/>
    <property type="project" value="UniProtKB-SubCell"/>
</dbReference>
<dbReference type="GO" id="GO:0099523">
    <property type="term" value="C:presynaptic cytosol"/>
    <property type="evidence" value="ECO:0000314"/>
    <property type="project" value="SynGO"/>
</dbReference>
<dbReference type="GO" id="GO:0000502">
    <property type="term" value="C:proteasome complex"/>
    <property type="evidence" value="ECO:0007669"/>
    <property type="project" value="UniProtKB-KW"/>
</dbReference>
<dbReference type="GO" id="GO:0045202">
    <property type="term" value="C:synapse"/>
    <property type="evidence" value="ECO:0000314"/>
    <property type="project" value="MGI"/>
</dbReference>
<dbReference type="GO" id="GO:0004843">
    <property type="term" value="F:cysteine-type deubiquitinase activity"/>
    <property type="evidence" value="ECO:0007669"/>
    <property type="project" value="UniProtKB-EC"/>
</dbReference>
<dbReference type="GO" id="GO:0004866">
    <property type="term" value="F:endopeptidase inhibitor activity"/>
    <property type="evidence" value="ECO:0007669"/>
    <property type="project" value="Ensembl"/>
</dbReference>
<dbReference type="GO" id="GO:0070628">
    <property type="term" value="F:proteasome binding"/>
    <property type="evidence" value="ECO:0007669"/>
    <property type="project" value="Ensembl"/>
</dbReference>
<dbReference type="GO" id="GO:0007268">
    <property type="term" value="P:chemical synaptic transmission"/>
    <property type="evidence" value="ECO:0000315"/>
    <property type="project" value="MGI"/>
</dbReference>
<dbReference type="GO" id="GO:0045087">
    <property type="term" value="P:innate immune response"/>
    <property type="evidence" value="ECO:0007669"/>
    <property type="project" value="UniProtKB-KW"/>
</dbReference>
<dbReference type="GO" id="GO:1904293">
    <property type="term" value="P:negative regulation of ERAD pathway"/>
    <property type="evidence" value="ECO:0007669"/>
    <property type="project" value="Ensembl"/>
</dbReference>
<dbReference type="GO" id="GO:2000059">
    <property type="term" value="P:negative regulation of ubiquitin-dependent protein catabolic process"/>
    <property type="evidence" value="ECO:0007669"/>
    <property type="project" value="Ensembl"/>
</dbReference>
<dbReference type="GO" id="GO:0043161">
    <property type="term" value="P:proteasome-mediated ubiquitin-dependent protein catabolic process"/>
    <property type="evidence" value="ECO:0007669"/>
    <property type="project" value="InterPro"/>
</dbReference>
<dbReference type="GO" id="GO:0071108">
    <property type="term" value="P:protein K48-linked deubiquitination"/>
    <property type="evidence" value="ECO:0007669"/>
    <property type="project" value="Ensembl"/>
</dbReference>
<dbReference type="GO" id="GO:0050920">
    <property type="term" value="P:regulation of chemotaxis"/>
    <property type="evidence" value="ECO:0007669"/>
    <property type="project" value="Ensembl"/>
</dbReference>
<dbReference type="CDD" id="cd02657">
    <property type="entry name" value="Peptidase_C19A"/>
    <property type="match status" value="1"/>
</dbReference>
<dbReference type="CDD" id="cd16104">
    <property type="entry name" value="Ubl_USP14_like"/>
    <property type="match status" value="1"/>
</dbReference>
<dbReference type="FunFam" id="3.10.20.90:FF:000119">
    <property type="entry name" value="Ubiquitin carboxyl-terminal hydrolase 14"/>
    <property type="match status" value="1"/>
</dbReference>
<dbReference type="FunFam" id="3.90.70.10:FF:000032">
    <property type="entry name" value="Ubiquitin carboxyl-terminal hydrolase 14"/>
    <property type="match status" value="1"/>
</dbReference>
<dbReference type="Gene3D" id="3.90.70.10">
    <property type="entry name" value="Cysteine proteinases"/>
    <property type="match status" value="1"/>
</dbReference>
<dbReference type="Gene3D" id="3.10.20.90">
    <property type="entry name" value="Phosphatidylinositol 3-kinase Catalytic Subunit, Chain A, domain 1"/>
    <property type="match status" value="1"/>
</dbReference>
<dbReference type="InterPro" id="IPR038765">
    <property type="entry name" value="Papain-like_cys_pep_sf"/>
</dbReference>
<dbReference type="InterPro" id="IPR001394">
    <property type="entry name" value="Peptidase_C19_UCH"/>
</dbReference>
<dbReference type="InterPro" id="IPR000626">
    <property type="entry name" value="Ubiquitin-like_dom"/>
</dbReference>
<dbReference type="InterPro" id="IPR029071">
    <property type="entry name" value="Ubiquitin-like_domsf"/>
</dbReference>
<dbReference type="InterPro" id="IPR019954">
    <property type="entry name" value="Ubiquitin_CS"/>
</dbReference>
<dbReference type="InterPro" id="IPR044635">
    <property type="entry name" value="UBP14-like"/>
</dbReference>
<dbReference type="InterPro" id="IPR018200">
    <property type="entry name" value="USP_CS"/>
</dbReference>
<dbReference type="InterPro" id="IPR028889">
    <property type="entry name" value="USP_dom"/>
</dbReference>
<dbReference type="PANTHER" id="PTHR43982">
    <property type="entry name" value="UBIQUITIN CARBOXYL-TERMINAL HYDROLASE"/>
    <property type="match status" value="1"/>
</dbReference>
<dbReference type="PANTHER" id="PTHR43982:SF1">
    <property type="entry name" value="UBIQUITIN CARBOXYL-TERMINAL HYDROLASE 14"/>
    <property type="match status" value="1"/>
</dbReference>
<dbReference type="Pfam" id="PF00443">
    <property type="entry name" value="UCH"/>
    <property type="match status" value="1"/>
</dbReference>
<dbReference type="SMART" id="SM00213">
    <property type="entry name" value="UBQ"/>
    <property type="match status" value="1"/>
</dbReference>
<dbReference type="SUPFAM" id="SSF54001">
    <property type="entry name" value="Cysteine proteinases"/>
    <property type="match status" value="1"/>
</dbReference>
<dbReference type="SUPFAM" id="SSF54236">
    <property type="entry name" value="Ubiquitin-like"/>
    <property type="match status" value="1"/>
</dbReference>
<dbReference type="PROSITE" id="PS00299">
    <property type="entry name" value="UBIQUITIN_1"/>
    <property type="match status" value="1"/>
</dbReference>
<dbReference type="PROSITE" id="PS50053">
    <property type="entry name" value="UBIQUITIN_2"/>
    <property type="match status" value="1"/>
</dbReference>
<dbReference type="PROSITE" id="PS00972">
    <property type="entry name" value="USP_1"/>
    <property type="match status" value="1"/>
</dbReference>
<dbReference type="PROSITE" id="PS00973">
    <property type="entry name" value="USP_2"/>
    <property type="match status" value="1"/>
</dbReference>
<dbReference type="PROSITE" id="PS50235">
    <property type="entry name" value="USP_3"/>
    <property type="match status" value="1"/>
</dbReference>